<accession>Q9H5V7</accession>
<accession>B3KVH7</accession>
<accession>D3DRE7</accession>
<accession>Q9H2T0</accession>
<organism>
    <name type="scientific">Homo sapiens</name>
    <name type="common">Human</name>
    <dbReference type="NCBI Taxonomy" id="9606"/>
    <lineage>
        <taxon>Eukaryota</taxon>
        <taxon>Metazoa</taxon>
        <taxon>Chordata</taxon>
        <taxon>Craniata</taxon>
        <taxon>Vertebrata</taxon>
        <taxon>Euteleostomi</taxon>
        <taxon>Mammalia</taxon>
        <taxon>Eutheria</taxon>
        <taxon>Euarchontoglires</taxon>
        <taxon>Primates</taxon>
        <taxon>Haplorrhini</taxon>
        <taxon>Catarrhini</taxon>
        <taxon>Hominidae</taxon>
        <taxon>Homo</taxon>
    </lineage>
</organism>
<comment type="function">
    <text evidence="3 4">Transcriptional repressor that binds the core 5'GNNTGTNG-3' DNA consensus sequence (PubMed:10978333, PubMed:31217188). Involved in megakaryocyte differentiation.</text>
</comment>
<comment type="subunit">
    <text evidence="3">Self-associates. Interacts with other family members; IKZF1, IKZF2, IKZF3 and IKZF4.</text>
</comment>
<comment type="interaction">
    <interactant intactId="EBI-2685636">
        <id>Q9H5V7</id>
    </interactant>
    <interactant intactId="EBI-747204">
        <id>Q9UKT9</id>
        <label>IKZF3</label>
    </interactant>
    <organismsDiffer>false</organismsDiffer>
    <experiments>3</experiments>
</comment>
<comment type="subcellular location">
    <subcellularLocation>
        <location evidence="4">Nucleus</location>
    </subcellularLocation>
</comment>
<comment type="tissue specificity">
    <text evidence="3">Expressed in brain, heart, skeletal muscle, kidney, and liver. Expressed in the hematopoietic cell lines MOLT-4, NALM-6 and K-562. Highly expressed in THP-1 and M-07e cell lines, which have characteristics of myeloid and early megakaryocytic cells respectively.</text>
</comment>
<comment type="domain">
    <text>The N-terminal zinc fingers are involved in sequence-specific DNA binding and heterotypic associations with other family members.</text>
</comment>
<comment type="domain">
    <text>C-terminal zinc fingers mediate homodimerization.</text>
</comment>
<comment type="disease" evidence="4 5">
    <disease id="DI-05994">
        <name>Thrombocytopenia 7</name>
        <acronym>THC7</acronym>
        <description>A form of thrombocytopenia, a hematologic disorder defined by a decrease in the number of platelets in circulating blood, resulting in the potential for increased bleeding and decreased ability for clotting. THC7 is an autosomal dominant form with highly variable severity, ranging from absence of bleeding symptoms to epistaxis or more severe bleeding episodes.</description>
        <dbReference type="MIM" id="619130"/>
    </disease>
    <text>The disease may be caused by variants affecting the gene represented in this entry.</text>
</comment>
<comment type="miscellaneous">
    <text>'Pegasus' was the winged horse in Greek mythology.</text>
</comment>
<comment type="similarity">
    <text evidence="6">Belongs to the Ikaros C2H2-type zinc-finger protein family.</text>
</comment>
<gene>
    <name type="primary">IKZF5</name>
    <name type="synonym">ZNFN1A5</name>
</gene>
<keyword id="KW-0225">Disease variant</keyword>
<keyword id="KW-0238">DNA-binding</keyword>
<keyword id="KW-1017">Isopeptide bond</keyword>
<keyword id="KW-0479">Metal-binding</keyword>
<keyword id="KW-0539">Nucleus</keyword>
<keyword id="KW-1267">Proteomics identification</keyword>
<keyword id="KW-1185">Reference proteome</keyword>
<keyword id="KW-0677">Repeat</keyword>
<keyword id="KW-0678">Repressor</keyword>
<keyword id="KW-0804">Transcription</keyword>
<keyword id="KW-0805">Transcription regulation</keyword>
<keyword id="KW-0832">Ubl conjugation</keyword>
<keyword id="KW-0862">Zinc</keyword>
<keyword id="KW-0863">Zinc-finger</keyword>
<feature type="chain" id="PRO_0000299471" description="Zinc finger protein Pegasus">
    <location>
        <begin position="1"/>
        <end position="419"/>
    </location>
</feature>
<feature type="zinc finger region" description="C2H2-type 1" evidence="1">
    <location>
        <begin position="82"/>
        <end position="104"/>
    </location>
</feature>
<feature type="zinc finger region" description="C2H2-type 2" evidence="1">
    <location>
        <begin position="110"/>
        <end position="132"/>
    </location>
</feature>
<feature type="zinc finger region" description="C2H2-type 3" evidence="1">
    <location>
        <begin position="138"/>
        <end position="161"/>
    </location>
</feature>
<feature type="zinc finger region" description="C2H2-type 4" evidence="1">
    <location>
        <begin position="364"/>
        <end position="386"/>
    </location>
</feature>
<feature type="zinc finger region" description="C2H2-type 5" evidence="1">
    <location>
        <begin position="392"/>
        <end position="416"/>
    </location>
</feature>
<feature type="region of interest" description="Disordered" evidence="2">
    <location>
        <begin position="223"/>
        <end position="247"/>
    </location>
</feature>
<feature type="region of interest" description="Disordered" evidence="2">
    <location>
        <begin position="262"/>
        <end position="356"/>
    </location>
</feature>
<feature type="compositionally biased region" description="Polar residues" evidence="2">
    <location>
        <begin position="223"/>
        <end position="236"/>
    </location>
</feature>
<feature type="compositionally biased region" description="Polar residues" evidence="2">
    <location>
        <begin position="262"/>
        <end position="273"/>
    </location>
</feature>
<feature type="compositionally biased region" description="Low complexity" evidence="2">
    <location>
        <begin position="290"/>
        <end position="311"/>
    </location>
</feature>
<feature type="compositionally biased region" description="Polar residues" evidence="2">
    <location>
        <begin position="332"/>
        <end position="349"/>
    </location>
</feature>
<feature type="cross-link" description="Glycyl lysine isopeptide (Lys-Gly) (interchain with G-Cter in SUMO2)" evidence="7 8 9 10">
    <location>
        <position position="5"/>
    </location>
</feature>
<feature type="cross-link" description="Glycyl lysine isopeptide (Lys-Gly) (interchain with G-Cter in SUMO2)" evidence="10">
    <location>
        <position position="185"/>
    </location>
</feature>
<feature type="sequence variant" id="VAR_085558" description="In THC7; uncertain significance." evidence="5">
    <original>Q</original>
    <variation>H</variation>
    <location>
        <position position="16"/>
    </location>
</feature>
<feature type="sequence variant" id="VAR_085559" description="In THC7; uncertain significance." evidence="5">
    <original>S</original>
    <variation>P</variation>
    <location>
        <position position="119"/>
    </location>
</feature>
<feature type="mutagenesis site" description="Decreased protein abundance. Decreased chromatin binding. Decreased localization to the nucleus. Tends to remain in the cytosol." evidence="4">
    <original>Y</original>
    <variation>C</variation>
    <location>
        <position position="89"/>
    </location>
</feature>
<feature type="mutagenesis site" description="Decreased protein abundance. Decreased chromatin binding. Decreased localization to the nucleus. Tends to remain in the cytosol." evidence="4">
    <original>R</original>
    <variation>W</variation>
    <location>
        <position position="96"/>
    </location>
</feature>
<feature type="mutagenesis site" description="No effect on protein abundance. No effect on chromatin binding. No effect on localization to the nucleus." evidence="4">
    <original>I</original>
    <variation>V</variation>
    <location>
        <position position="98"/>
    </location>
</feature>
<feature type="mutagenesis site" description="Decreased protein abundance. Decreased chromatin binding. Decreased localization to the nucleus. Tends to remain in the cytosol." evidence="4">
    <original>G</original>
    <variation>E</variation>
    <location>
        <position position="134"/>
    </location>
</feature>
<feature type="mutagenesis site" description="Decreased protein abundance. Decreased chromatin binding. Decreased localization to the nucleus. Tends to remain in the cytosol." evidence="4">
    <original>C</original>
    <variation>R</variation>
    <location>
        <position position="140"/>
    </location>
</feature>
<feature type="mutagenesis site" description="Decreased protein abundance. Decreased chromatin binding. Decreased localization to the nucleus. Tends to remain in the cytosol." evidence="4">
    <original>H</original>
    <variation>Y</variation>
    <location>
        <position position="155"/>
    </location>
</feature>
<feature type="mutagenesis site" description="No effect on protein abundance. No effect on chromatin binding. No effect on localization to the nucleus." evidence="4">
    <original>S</original>
    <variation>G</variation>
    <location>
        <position position="200"/>
    </location>
</feature>
<feature type="sequence conflict" description="In Ref. 1; AAG39220." evidence="6" ref="1">
    <original>P</original>
    <variation>L</variation>
    <location>
        <position position="209"/>
    </location>
</feature>
<name>IKZF5_HUMAN</name>
<proteinExistence type="evidence at protein level"/>
<sequence length="419" mass="46510">MGEKKPEPLDFVKDFQEYLTQQTHHVNMISGSVSGDKEAEALQGAGTDGDQNGLDHPSVEVSLDENSGMLVDGFERTFDGKLKCRYCNYASKGTARLIEHIRIHTGEKPHRCHLCPFASAYERHLEAHMRSHTGEKPYKCELCSFRCSDRSNLSHHRRRKHKMVPIKGTRSSLSSKKMWGVLQKKTSNLGYSRRALINLSPPSMVVQKPDYLNDFTHEIPNIQTDSYESMAKTTPTGGLPRDPQELMVDNPLNQLSTLAGQLSSLPPENQNPASPDVVPCPDEKPFMIQQPSTQAVVSAVSASIPQSSSPTSPEPRPSHSQRNYSPVAGPSSEPSAHTSTPSIGNSQPSTPAPALPVQDPQLLHHCQHCDMYFADNILYTIHMGCHGYENPFQCNICGCKCKNKYDFACHFARGQHNQH</sequence>
<dbReference type="EMBL" id="AF230808">
    <property type="protein sequence ID" value="AAG39220.1"/>
    <property type="molecule type" value="mRNA"/>
</dbReference>
<dbReference type="EMBL" id="AK026626">
    <property type="protein sequence ID" value="BAB15512.1"/>
    <property type="molecule type" value="mRNA"/>
</dbReference>
<dbReference type="EMBL" id="AK122899">
    <property type="protein sequence ID" value="BAG53789.1"/>
    <property type="molecule type" value="mRNA"/>
</dbReference>
<dbReference type="EMBL" id="CR749800">
    <property type="protein sequence ID" value="CAH18660.1"/>
    <property type="molecule type" value="mRNA"/>
</dbReference>
<dbReference type="EMBL" id="BX647958">
    <property type="protein sequence ID" value="CAH56199.1"/>
    <property type="molecule type" value="mRNA"/>
</dbReference>
<dbReference type="EMBL" id="CH471066">
    <property type="protein sequence ID" value="EAW49292.1"/>
    <property type="molecule type" value="Genomic_DNA"/>
</dbReference>
<dbReference type="EMBL" id="CH471066">
    <property type="protein sequence ID" value="EAW49293.1"/>
    <property type="molecule type" value="Genomic_DNA"/>
</dbReference>
<dbReference type="EMBL" id="CH471066">
    <property type="protein sequence ID" value="EAW49294.1"/>
    <property type="molecule type" value="Genomic_DNA"/>
</dbReference>
<dbReference type="CCDS" id="CCDS41574.1"/>
<dbReference type="RefSeq" id="NP_001258769.1">
    <property type="nucleotide sequence ID" value="NM_001271840.1"/>
</dbReference>
<dbReference type="RefSeq" id="NP_001359052.1">
    <property type="nucleotide sequence ID" value="NM_001372123.1"/>
</dbReference>
<dbReference type="RefSeq" id="NP_001359054.1">
    <property type="nucleotide sequence ID" value="NM_001372125.1"/>
</dbReference>
<dbReference type="RefSeq" id="NP_001359055.1">
    <property type="nucleotide sequence ID" value="NM_001372126.1"/>
</dbReference>
<dbReference type="RefSeq" id="NP_001359056.1">
    <property type="nucleotide sequence ID" value="NM_001372127.1"/>
</dbReference>
<dbReference type="RefSeq" id="NP_001359057.1">
    <property type="nucleotide sequence ID" value="NM_001372128.1"/>
</dbReference>
<dbReference type="RefSeq" id="XP_006718010.1">
    <property type="nucleotide sequence ID" value="XM_006717947.5"/>
</dbReference>
<dbReference type="RefSeq" id="XP_016872039.1">
    <property type="nucleotide sequence ID" value="XM_017016550.1"/>
</dbReference>
<dbReference type="RefSeq" id="XP_016872040.1">
    <property type="nucleotide sequence ID" value="XM_017016551.1"/>
</dbReference>
<dbReference type="RefSeq" id="XP_016872041.1">
    <property type="nucleotide sequence ID" value="XM_017016552.1"/>
</dbReference>
<dbReference type="RefSeq" id="XP_047281601.1">
    <property type="nucleotide sequence ID" value="XM_047425645.1"/>
</dbReference>
<dbReference type="RefSeq" id="XP_047281602.1">
    <property type="nucleotide sequence ID" value="XM_047425646.1"/>
</dbReference>
<dbReference type="RefSeq" id="XP_047281603.1">
    <property type="nucleotide sequence ID" value="XM_047425647.1"/>
</dbReference>
<dbReference type="RefSeq" id="XP_054222559.1">
    <property type="nucleotide sequence ID" value="XM_054366584.1"/>
</dbReference>
<dbReference type="RefSeq" id="XP_054222560.1">
    <property type="nucleotide sequence ID" value="XM_054366585.1"/>
</dbReference>
<dbReference type="RefSeq" id="XP_054222561.1">
    <property type="nucleotide sequence ID" value="XM_054366586.1"/>
</dbReference>
<dbReference type="RefSeq" id="XP_054222562.1">
    <property type="nucleotide sequence ID" value="XM_054366587.1"/>
</dbReference>
<dbReference type="SMR" id="Q9H5V7"/>
<dbReference type="BioGRID" id="122147">
    <property type="interactions" value="66"/>
</dbReference>
<dbReference type="FunCoup" id="Q9H5V7">
    <property type="interactions" value="2022"/>
</dbReference>
<dbReference type="IntAct" id="Q9H5V7">
    <property type="interactions" value="58"/>
</dbReference>
<dbReference type="STRING" id="9606.ENSP00000357881"/>
<dbReference type="GlyGen" id="Q9H5V7">
    <property type="glycosylation" value="1 site"/>
</dbReference>
<dbReference type="iPTMnet" id="Q9H5V7"/>
<dbReference type="PhosphoSitePlus" id="Q9H5V7"/>
<dbReference type="BioMuta" id="IKZF5"/>
<dbReference type="DMDM" id="74761459"/>
<dbReference type="jPOST" id="Q9H5V7"/>
<dbReference type="MassIVE" id="Q9H5V7"/>
<dbReference type="PaxDb" id="9606-ENSP00000357881"/>
<dbReference type="PeptideAtlas" id="Q9H5V7"/>
<dbReference type="ProteomicsDB" id="80932"/>
<dbReference type="Antibodypedia" id="9078">
    <property type="antibodies" value="54 antibodies from 18 providers"/>
</dbReference>
<dbReference type="DNASU" id="64376"/>
<dbReference type="Ensembl" id="ENST00000368886.10">
    <property type="protein sequence ID" value="ENSP00000357881.5"/>
    <property type="gene ID" value="ENSG00000095574.12"/>
</dbReference>
<dbReference type="Ensembl" id="ENST00000617859.4">
    <property type="protein sequence ID" value="ENSP00000478056.1"/>
    <property type="gene ID" value="ENSG00000095574.12"/>
</dbReference>
<dbReference type="GeneID" id="64376"/>
<dbReference type="KEGG" id="hsa:64376"/>
<dbReference type="MANE-Select" id="ENST00000368886.10">
    <property type="protein sequence ID" value="ENSP00000357881.5"/>
    <property type="RefSeq nucleotide sequence ID" value="NM_001372123.1"/>
    <property type="RefSeq protein sequence ID" value="NP_001359052.1"/>
</dbReference>
<dbReference type="UCSC" id="uc001lha.4">
    <property type="organism name" value="human"/>
</dbReference>
<dbReference type="AGR" id="HGNC:14283"/>
<dbReference type="CTD" id="64376"/>
<dbReference type="DisGeNET" id="64376"/>
<dbReference type="GeneCards" id="IKZF5"/>
<dbReference type="HGNC" id="HGNC:14283">
    <property type="gene designation" value="IKZF5"/>
</dbReference>
<dbReference type="HPA" id="ENSG00000095574">
    <property type="expression patterns" value="Low tissue specificity"/>
</dbReference>
<dbReference type="MalaCards" id="IKZF5"/>
<dbReference type="MIM" id="606238">
    <property type="type" value="gene"/>
</dbReference>
<dbReference type="MIM" id="619130">
    <property type="type" value="phenotype"/>
</dbReference>
<dbReference type="neXtProt" id="NX_Q9H5V7"/>
<dbReference type="OpenTargets" id="ENSG00000095574"/>
<dbReference type="Orphanet" id="168629">
    <property type="disease" value="Autosomal thrombocytopenia with normal platelets"/>
</dbReference>
<dbReference type="PharmGKB" id="PA162391969"/>
<dbReference type="VEuPathDB" id="HostDB:ENSG00000095574"/>
<dbReference type="eggNOG" id="KOG1721">
    <property type="taxonomic scope" value="Eukaryota"/>
</dbReference>
<dbReference type="GeneTree" id="ENSGT00940000155035"/>
<dbReference type="HOGENOM" id="CLU_734778_0_0_1"/>
<dbReference type="InParanoid" id="Q9H5V7"/>
<dbReference type="OMA" id="FMIQQPT"/>
<dbReference type="OrthoDB" id="5576026at2759"/>
<dbReference type="PAN-GO" id="Q9H5V7">
    <property type="GO annotations" value="3 GO annotations based on evolutionary models"/>
</dbReference>
<dbReference type="PhylomeDB" id="Q9H5V7"/>
<dbReference type="TreeFam" id="TF331860"/>
<dbReference type="PathwayCommons" id="Q9H5V7"/>
<dbReference type="SignaLink" id="Q9H5V7"/>
<dbReference type="SIGNOR" id="Q9H5V7"/>
<dbReference type="BioGRID-ORCS" id="64376">
    <property type="hits" value="11 hits in 1182 CRISPR screens"/>
</dbReference>
<dbReference type="ChiTaRS" id="IKZF5">
    <property type="organism name" value="human"/>
</dbReference>
<dbReference type="GenomeRNAi" id="64376"/>
<dbReference type="Pharos" id="Q9H5V7">
    <property type="development level" value="Tbio"/>
</dbReference>
<dbReference type="PRO" id="PR:Q9H5V7"/>
<dbReference type="Proteomes" id="UP000005640">
    <property type="component" value="Chromosome 10"/>
</dbReference>
<dbReference type="RNAct" id="Q9H5V7">
    <property type="molecule type" value="protein"/>
</dbReference>
<dbReference type="Bgee" id="ENSG00000095574">
    <property type="expression patterns" value="Expressed in endothelial cell and 182 other cell types or tissues"/>
</dbReference>
<dbReference type="GO" id="GO:0005634">
    <property type="term" value="C:nucleus"/>
    <property type="evidence" value="ECO:0000315"/>
    <property type="project" value="UniProtKB"/>
</dbReference>
<dbReference type="GO" id="GO:0032991">
    <property type="term" value="C:protein-containing complex"/>
    <property type="evidence" value="ECO:0000315"/>
    <property type="project" value="CAFA"/>
</dbReference>
<dbReference type="GO" id="GO:0003682">
    <property type="term" value="F:chromatin binding"/>
    <property type="evidence" value="ECO:0000315"/>
    <property type="project" value="UniProtKB"/>
</dbReference>
<dbReference type="GO" id="GO:0003700">
    <property type="term" value="F:DNA-binding transcription factor activity"/>
    <property type="evidence" value="ECO:0000318"/>
    <property type="project" value="GO_Central"/>
</dbReference>
<dbReference type="GO" id="GO:0001227">
    <property type="term" value="F:DNA-binding transcription repressor activity, RNA polymerase II-specific"/>
    <property type="evidence" value="ECO:0000314"/>
    <property type="project" value="NTNU_SB"/>
</dbReference>
<dbReference type="GO" id="GO:0019904">
    <property type="term" value="F:protein domain specific binding"/>
    <property type="evidence" value="ECO:0000353"/>
    <property type="project" value="CAFA"/>
</dbReference>
<dbReference type="GO" id="GO:0000978">
    <property type="term" value="F:RNA polymerase II cis-regulatory region sequence-specific DNA binding"/>
    <property type="evidence" value="ECO:0000318"/>
    <property type="project" value="GO_Central"/>
</dbReference>
<dbReference type="GO" id="GO:0000977">
    <property type="term" value="F:RNA polymerase II transcription regulatory region sequence-specific DNA binding"/>
    <property type="evidence" value="ECO:0000314"/>
    <property type="project" value="NTNU_SB"/>
</dbReference>
<dbReference type="GO" id="GO:0008270">
    <property type="term" value="F:zinc ion binding"/>
    <property type="evidence" value="ECO:0000315"/>
    <property type="project" value="CAFA"/>
</dbReference>
<dbReference type="GO" id="GO:0000122">
    <property type="term" value="P:negative regulation of transcription by RNA polymerase II"/>
    <property type="evidence" value="ECO:0000314"/>
    <property type="project" value="NTNU_SB"/>
</dbReference>
<dbReference type="GO" id="GO:0006357">
    <property type="term" value="P:regulation of transcription by RNA polymerase II"/>
    <property type="evidence" value="ECO:0000318"/>
    <property type="project" value="GO_Central"/>
</dbReference>
<dbReference type="FunFam" id="3.30.160.60:FF:000402">
    <property type="entry name" value="IKAROS family zinc finger 5"/>
    <property type="match status" value="1"/>
</dbReference>
<dbReference type="FunFam" id="3.30.160.60:FF:000924">
    <property type="entry name" value="IKAROS family zinc finger 5"/>
    <property type="match status" value="1"/>
</dbReference>
<dbReference type="FunFam" id="3.30.160.60:FF:001097">
    <property type="entry name" value="IKAROS family zinc finger 5"/>
    <property type="match status" value="1"/>
</dbReference>
<dbReference type="Gene3D" id="3.30.160.60">
    <property type="entry name" value="Classic Zinc Finger"/>
    <property type="match status" value="4"/>
</dbReference>
<dbReference type="InterPro" id="IPR050589">
    <property type="entry name" value="Ikaros_C2H2-ZF"/>
</dbReference>
<dbReference type="InterPro" id="IPR036236">
    <property type="entry name" value="Znf_C2H2_sf"/>
</dbReference>
<dbReference type="InterPro" id="IPR013087">
    <property type="entry name" value="Znf_C2H2_type"/>
</dbReference>
<dbReference type="PANTHER" id="PTHR24404">
    <property type="entry name" value="ZINC FINGER PROTEIN"/>
    <property type="match status" value="1"/>
</dbReference>
<dbReference type="PANTHER" id="PTHR24404:SF55">
    <property type="entry name" value="ZINC FINGER PROTEIN PEGASUS"/>
    <property type="match status" value="1"/>
</dbReference>
<dbReference type="SMART" id="SM00355">
    <property type="entry name" value="ZnF_C2H2"/>
    <property type="match status" value="5"/>
</dbReference>
<dbReference type="SUPFAM" id="SSF57667">
    <property type="entry name" value="beta-beta-alpha zinc fingers"/>
    <property type="match status" value="3"/>
</dbReference>
<dbReference type="PROSITE" id="PS00028">
    <property type="entry name" value="ZINC_FINGER_C2H2_1"/>
    <property type="match status" value="3"/>
</dbReference>
<dbReference type="PROSITE" id="PS50157">
    <property type="entry name" value="ZINC_FINGER_C2H2_2"/>
    <property type="match status" value="4"/>
</dbReference>
<protein>
    <recommendedName>
        <fullName>Zinc finger protein Pegasus</fullName>
    </recommendedName>
    <alternativeName>
        <fullName>Ikaros family zinc finger protein 5</fullName>
    </alternativeName>
</protein>
<evidence type="ECO:0000255" key="1">
    <source>
        <dbReference type="PROSITE-ProRule" id="PRU00042"/>
    </source>
</evidence>
<evidence type="ECO:0000256" key="2">
    <source>
        <dbReference type="SAM" id="MobiDB-lite"/>
    </source>
</evidence>
<evidence type="ECO:0000269" key="3">
    <source>
    </source>
</evidence>
<evidence type="ECO:0000269" key="4">
    <source>
    </source>
</evidence>
<evidence type="ECO:0000269" key="5">
    <source>
    </source>
</evidence>
<evidence type="ECO:0000305" key="6"/>
<evidence type="ECO:0007744" key="7">
    <source>
    </source>
</evidence>
<evidence type="ECO:0007744" key="8">
    <source>
    </source>
</evidence>
<evidence type="ECO:0007744" key="9">
    <source>
    </source>
</evidence>
<evidence type="ECO:0007744" key="10">
    <source>
    </source>
</evidence>
<reference key="1">
    <citation type="journal article" date="2000" name="J. Biol. Chem.">
        <title>Eos and pegasus, two members of the Ikaros family of proteins with distinct DNA binding activities.</title>
        <authorList>
            <person name="Perdomo J."/>
            <person name="Holmes M."/>
            <person name="Chong B."/>
            <person name="Crossley M."/>
        </authorList>
    </citation>
    <scope>NUCLEOTIDE SEQUENCE [MRNA]</scope>
    <scope>FUNCTION</scope>
    <scope>TISSUE SPECIFICITY</scope>
    <scope>INTERACTION WITH IKZF1; IKZF2; IKZF3 AND IKZF4</scope>
</reference>
<reference key="2">
    <citation type="journal article" date="2004" name="Nat. Genet.">
        <title>Complete sequencing and characterization of 21,243 full-length human cDNAs.</title>
        <authorList>
            <person name="Ota T."/>
            <person name="Suzuki Y."/>
            <person name="Nishikawa T."/>
            <person name="Otsuki T."/>
            <person name="Sugiyama T."/>
            <person name="Irie R."/>
            <person name="Wakamatsu A."/>
            <person name="Hayashi K."/>
            <person name="Sato H."/>
            <person name="Nagai K."/>
            <person name="Kimura K."/>
            <person name="Makita H."/>
            <person name="Sekine M."/>
            <person name="Obayashi M."/>
            <person name="Nishi T."/>
            <person name="Shibahara T."/>
            <person name="Tanaka T."/>
            <person name="Ishii S."/>
            <person name="Yamamoto J."/>
            <person name="Saito K."/>
            <person name="Kawai Y."/>
            <person name="Isono Y."/>
            <person name="Nakamura Y."/>
            <person name="Nagahari K."/>
            <person name="Murakami K."/>
            <person name="Yasuda T."/>
            <person name="Iwayanagi T."/>
            <person name="Wagatsuma M."/>
            <person name="Shiratori A."/>
            <person name="Sudo H."/>
            <person name="Hosoiri T."/>
            <person name="Kaku Y."/>
            <person name="Kodaira H."/>
            <person name="Kondo H."/>
            <person name="Sugawara M."/>
            <person name="Takahashi M."/>
            <person name="Kanda K."/>
            <person name="Yokoi T."/>
            <person name="Furuya T."/>
            <person name="Kikkawa E."/>
            <person name="Omura Y."/>
            <person name="Abe K."/>
            <person name="Kamihara K."/>
            <person name="Katsuta N."/>
            <person name="Sato K."/>
            <person name="Tanikawa M."/>
            <person name="Yamazaki M."/>
            <person name="Ninomiya K."/>
            <person name="Ishibashi T."/>
            <person name="Yamashita H."/>
            <person name="Murakawa K."/>
            <person name="Fujimori K."/>
            <person name="Tanai H."/>
            <person name="Kimata M."/>
            <person name="Watanabe M."/>
            <person name="Hiraoka S."/>
            <person name="Chiba Y."/>
            <person name="Ishida S."/>
            <person name="Ono Y."/>
            <person name="Takiguchi S."/>
            <person name="Watanabe S."/>
            <person name="Yosida M."/>
            <person name="Hotuta T."/>
            <person name="Kusano J."/>
            <person name="Kanehori K."/>
            <person name="Takahashi-Fujii A."/>
            <person name="Hara H."/>
            <person name="Tanase T.-O."/>
            <person name="Nomura Y."/>
            <person name="Togiya S."/>
            <person name="Komai F."/>
            <person name="Hara R."/>
            <person name="Takeuchi K."/>
            <person name="Arita M."/>
            <person name="Imose N."/>
            <person name="Musashino K."/>
            <person name="Yuuki H."/>
            <person name="Oshima A."/>
            <person name="Sasaki N."/>
            <person name="Aotsuka S."/>
            <person name="Yoshikawa Y."/>
            <person name="Matsunawa H."/>
            <person name="Ichihara T."/>
            <person name="Shiohata N."/>
            <person name="Sano S."/>
            <person name="Moriya S."/>
            <person name="Momiyama H."/>
            <person name="Satoh N."/>
            <person name="Takami S."/>
            <person name="Terashima Y."/>
            <person name="Suzuki O."/>
            <person name="Nakagawa S."/>
            <person name="Senoh A."/>
            <person name="Mizoguchi H."/>
            <person name="Goto Y."/>
            <person name="Shimizu F."/>
            <person name="Wakebe H."/>
            <person name="Hishigaki H."/>
            <person name="Watanabe T."/>
            <person name="Sugiyama A."/>
            <person name="Takemoto M."/>
            <person name="Kawakami B."/>
            <person name="Yamazaki M."/>
            <person name="Watanabe K."/>
            <person name="Kumagai A."/>
            <person name="Itakura S."/>
            <person name="Fukuzumi Y."/>
            <person name="Fujimori Y."/>
            <person name="Komiyama M."/>
            <person name="Tashiro H."/>
            <person name="Tanigami A."/>
            <person name="Fujiwara T."/>
            <person name="Ono T."/>
            <person name="Yamada K."/>
            <person name="Fujii Y."/>
            <person name="Ozaki K."/>
            <person name="Hirao M."/>
            <person name="Ohmori Y."/>
            <person name="Kawabata A."/>
            <person name="Hikiji T."/>
            <person name="Kobatake N."/>
            <person name="Inagaki H."/>
            <person name="Ikema Y."/>
            <person name="Okamoto S."/>
            <person name="Okitani R."/>
            <person name="Kawakami T."/>
            <person name="Noguchi S."/>
            <person name="Itoh T."/>
            <person name="Shigeta K."/>
            <person name="Senba T."/>
            <person name="Matsumura K."/>
            <person name="Nakajima Y."/>
            <person name="Mizuno T."/>
            <person name="Morinaga M."/>
            <person name="Sasaki M."/>
            <person name="Togashi T."/>
            <person name="Oyama M."/>
            <person name="Hata H."/>
            <person name="Watanabe M."/>
            <person name="Komatsu T."/>
            <person name="Mizushima-Sugano J."/>
            <person name="Satoh T."/>
            <person name="Shirai Y."/>
            <person name="Takahashi Y."/>
            <person name="Nakagawa K."/>
            <person name="Okumura K."/>
            <person name="Nagase T."/>
            <person name="Nomura N."/>
            <person name="Kikuchi H."/>
            <person name="Masuho Y."/>
            <person name="Yamashita R."/>
            <person name="Nakai K."/>
            <person name="Yada T."/>
            <person name="Nakamura Y."/>
            <person name="Ohara O."/>
            <person name="Isogai T."/>
            <person name="Sugano S."/>
        </authorList>
    </citation>
    <scope>NUCLEOTIDE SEQUENCE [LARGE SCALE MRNA]</scope>
    <source>
        <tissue>Synovial cell</tissue>
    </source>
</reference>
<reference key="3">
    <citation type="journal article" date="2007" name="BMC Genomics">
        <title>The full-ORF clone resource of the German cDNA consortium.</title>
        <authorList>
            <person name="Bechtel S."/>
            <person name="Rosenfelder H."/>
            <person name="Duda A."/>
            <person name="Schmidt C.P."/>
            <person name="Ernst U."/>
            <person name="Wellenreuther R."/>
            <person name="Mehrle A."/>
            <person name="Schuster C."/>
            <person name="Bahr A."/>
            <person name="Bloecker H."/>
            <person name="Heubner D."/>
            <person name="Hoerlein A."/>
            <person name="Michel G."/>
            <person name="Wedler H."/>
            <person name="Koehrer K."/>
            <person name="Ottenwaelder B."/>
            <person name="Poustka A."/>
            <person name="Wiemann S."/>
            <person name="Schupp I."/>
        </authorList>
    </citation>
    <scope>NUCLEOTIDE SEQUENCE [LARGE SCALE MRNA]</scope>
    <source>
        <tissue>Endometrial adenocarcinoma</tissue>
        <tissue>Testis carcinoma</tissue>
    </source>
</reference>
<reference key="4">
    <citation type="submission" date="2006-12" db="EMBL/GenBank/DDBJ databases">
        <authorList>
            <person name="Mural R.J."/>
            <person name="Istrail S."/>
            <person name="Sutton G.G."/>
            <person name="Florea L."/>
            <person name="Halpern A.L."/>
            <person name="Mobarry C.M."/>
            <person name="Lippert R."/>
            <person name="Walenz B."/>
            <person name="Shatkay H."/>
            <person name="Dew I."/>
            <person name="Miller J.R."/>
            <person name="Flanigan M.J."/>
            <person name="Edwards N.J."/>
            <person name="Bolanos R."/>
            <person name="Fasulo D."/>
            <person name="Halldorsson B.V."/>
            <person name="Hannenhalli S."/>
            <person name="Turner R."/>
            <person name="Yooseph S."/>
            <person name="Lu F."/>
            <person name="Nusskern D.R."/>
            <person name="Shue B.C."/>
            <person name="Zheng X.H."/>
            <person name="Zhong F."/>
            <person name="Delcher A.L."/>
            <person name="Huson D.H."/>
            <person name="Kravitz S.A."/>
            <person name="Mouchard L."/>
            <person name="Reinert K."/>
            <person name="Remington K.A."/>
            <person name="Clark A.G."/>
            <person name="Waterman M.S."/>
            <person name="Eichler E.E."/>
            <person name="Adams M.D."/>
            <person name="Hunkapiller M.W."/>
            <person name="Myers E.W."/>
            <person name="Venter J.C."/>
        </authorList>
    </citation>
    <scope>NUCLEOTIDE SEQUENCE [LARGE SCALE GENOMIC DNA]</scope>
</reference>
<reference key="5">
    <citation type="submission" date="2005-09" db="EMBL/GenBank/DDBJ databases">
        <authorList>
            <person name="Mural R.J."/>
            <person name="Istrail S."/>
            <person name="Sutton G.G."/>
            <person name="Florea L."/>
            <person name="Halpern A.L."/>
            <person name="Mobarry C.M."/>
            <person name="Lippert R."/>
            <person name="Walenz B."/>
            <person name="Shatkay H."/>
            <person name="Dew I."/>
            <person name="Miller J.R."/>
            <person name="Flanigan M.J."/>
            <person name="Edwards N.J."/>
            <person name="Bolanos R."/>
            <person name="Fasulo D."/>
            <person name="Halldorsson B.V."/>
            <person name="Hannenhalli S."/>
            <person name="Turner R."/>
            <person name="Yooseph S."/>
            <person name="Lu F."/>
            <person name="Nusskern D.R."/>
            <person name="Shue B.C."/>
            <person name="Zheng X.H."/>
            <person name="Zhong F."/>
            <person name="Delcher A.L."/>
            <person name="Huson D.H."/>
            <person name="Kravitz S.A."/>
            <person name="Mouchard L."/>
            <person name="Reinert K."/>
            <person name="Remington K.A."/>
            <person name="Clark A.G."/>
            <person name="Waterman M.S."/>
            <person name="Eichler E.E."/>
            <person name="Adams M.D."/>
            <person name="Hunkapiller M.W."/>
            <person name="Myers E.W."/>
            <person name="Venter J.C."/>
        </authorList>
    </citation>
    <scope>NUCLEOTIDE SEQUENCE [LARGE SCALE GENOMIC DNA]</scope>
</reference>
<reference key="6">
    <citation type="journal article" date="2011" name="Sci. Signal.">
        <title>System-wide temporal characterization of the proteome and phosphoproteome of human embryonic stem cell differentiation.</title>
        <authorList>
            <person name="Rigbolt K.T."/>
            <person name="Prokhorova T.A."/>
            <person name="Akimov V."/>
            <person name="Henningsen J."/>
            <person name="Johansen P.T."/>
            <person name="Kratchmarova I."/>
            <person name="Kassem M."/>
            <person name="Mann M."/>
            <person name="Olsen J.V."/>
            <person name="Blagoev B."/>
        </authorList>
    </citation>
    <scope>IDENTIFICATION BY MASS SPECTROMETRY [LARGE SCALE ANALYSIS]</scope>
</reference>
<reference key="7">
    <citation type="journal article" date="2014" name="Nat. Struct. Mol. Biol.">
        <title>Uncovering global SUMOylation signaling networks in a site-specific manner.</title>
        <authorList>
            <person name="Hendriks I.A."/>
            <person name="D'Souza R.C."/>
            <person name="Yang B."/>
            <person name="Verlaan-de Vries M."/>
            <person name="Mann M."/>
            <person name="Vertegaal A.C."/>
        </authorList>
    </citation>
    <scope>SUMOYLATION [LARGE SCALE ANALYSIS] AT LYS-5</scope>
    <scope>IDENTIFICATION BY MASS SPECTROMETRY [LARGE SCALE ANALYSIS]</scope>
</reference>
<reference key="8">
    <citation type="journal article" date="2015" name="Cell Rep.">
        <title>SUMO-2 orchestrates chromatin modifiers in response to DNA damage.</title>
        <authorList>
            <person name="Hendriks I.A."/>
            <person name="Treffers L.W."/>
            <person name="Verlaan-de Vries M."/>
            <person name="Olsen J.V."/>
            <person name="Vertegaal A.C."/>
        </authorList>
    </citation>
    <scope>SUMOYLATION [LARGE SCALE ANALYSIS] AT LYS-5</scope>
    <scope>IDENTIFICATION BY MASS SPECTROMETRY [LARGE SCALE ANALYSIS]</scope>
</reference>
<reference key="9">
    <citation type="journal article" date="2015" name="Mol. Cell. Proteomics">
        <title>System-wide analysis of SUMOylation dynamics in response to replication stress reveals novel small ubiquitin-like modified target proteins and acceptor lysines relevant for genome stability.</title>
        <authorList>
            <person name="Xiao Z."/>
            <person name="Chang J.G."/>
            <person name="Hendriks I.A."/>
            <person name="Sigurdsson J.O."/>
            <person name="Olsen J.V."/>
            <person name="Vertegaal A.C."/>
        </authorList>
    </citation>
    <scope>SUMOYLATION [LARGE SCALE ANALYSIS] AT LYS-5</scope>
    <scope>IDENTIFICATION BY MASS SPECTROMETRY [LARGE SCALE ANALYSIS]</scope>
</reference>
<reference key="10">
    <citation type="journal article" date="2017" name="Nat. Struct. Mol. Biol.">
        <title>Site-specific mapping of the human SUMO proteome reveals co-modification with phosphorylation.</title>
        <authorList>
            <person name="Hendriks I.A."/>
            <person name="Lyon D."/>
            <person name="Young C."/>
            <person name="Jensen L.J."/>
            <person name="Vertegaal A.C."/>
            <person name="Nielsen M.L."/>
        </authorList>
    </citation>
    <scope>SUMOYLATION [LARGE SCALE ANALYSIS] AT LYS-5 AND LYS-185</scope>
    <scope>IDENTIFICATION BY MASS SPECTROMETRY [LARGE SCALE ANALYSIS]</scope>
</reference>
<reference key="11">
    <citation type="journal article" date="2019" name="Blood">
        <title>Germline mutations in the transcription factor IKZF5 cause thrombocytopenia.</title>
        <authorList>
            <consortium name="NIHR BioResource"/>
            <person name="Lentaigne C."/>
            <person name="Greene D."/>
            <person name="Sivapalaratnam S."/>
            <person name="Favier R."/>
            <person name="Seyres D."/>
            <person name="Thys C."/>
            <person name="Grassi L."/>
            <person name="Mangles S."/>
            <person name="Sibson K."/>
            <person name="Stubbs M."/>
            <person name="Burden F."/>
            <person name="Bordet J.C."/>
            <person name="Armari-Alla C."/>
            <person name="Erber W."/>
            <person name="Farrow S."/>
            <person name="Gleadall N."/>
            <person name="Gomez K."/>
            <person name="Megy K."/>
            <person name="Papadia S."/>
            <person name="Penkett C.J."/>
            <person name="Sims M.C."/>
            <person name="Stefanucci L."/>
            <person name="Stephens J.C."/>
            <person name="Read R.J."/>
            <person name="Stirrups K.E."/>
            <person name="Ouwehand W.H."/>
            <person name="Laffan M.A."/>
            <person name="Frontini M."/>
            <person name="Freson K."/>
            <person name="Turro E."/>
        </authorList>
    </citation>
    <scope>FUNCTION</scope>
    <scope>SUBCELLULAR LOCATION</scope>
    <scope>INVOLVEMENT IN THC7</scope>
    <scope>MUTAGENESIS OF TYR-89; ARG-96; ILE-98; GLY-134; CYS-140; HIS-155 AND SER-200</scope>
</reference>
<reference key="12">
    <citation type="journal article" date="2021" name="Platelets">
        <title>Highly impaired platelet ultrastructure in two families with novel IKZF5 variants.</title>
        <authorList>
            <person name="Leinoe E."/>
            <person name="Kjaersgaard M."/>
            <person name="Zetterberg E."/>
            <person name="Ostrowski S."/>
            <person name="Greinacher A."/>
            <person name="Rossing M."/>
        </authorList>
    </citation>
    <scope>VARIANTS THC7 VARIANT HIS-16 AND PRO-119</scope>
</reference>